<dbReference type="EMBL" id="X98866">
    <property type="protein sequence ID" value="CAA67374.2"/>
    <property type="molecule type" value="mRNA"/>
</dbReference>
<dbReference type="PIR" id="T07385">
    <property type="entry name" value="T07385"/>
</dbReference>
<dbReference type="RefSeq" id="NP_001234278.1">
    <property type="nucleotide sequence ID" value="NM_001247349.1"/>
</dbReference>
<dbReference type="SMR" id="P93207"/>
<dbReference type="FunCoup" id="P93207">
    <property type="interactions" value="2773"/>
</dbReference>
<dbReference type="STRING" id="4081.P93207"/>
<dbReference type="PaxDb" id="4081-Solyc04g076060.2.1"/>
<dbReference type="GeneID" id="544116"/>
<dbReference type="KEGG" id="sly:544116"/>
<dbReference type="eggNOG" id="KOG0841">
    <property type="taxonomic scope" value="Eukaryota"/>
</dbReference>
<dbReference type="HOGENOM" id="CLU_058290_0_0_1"/>
<dbReference type="InParanoid" id="P93207"/>
<dbReference type="OrthoDB" id="10260625at2759"/>
<dbReference type="PhylomeDB" id="P93207"/>
<dbReference type="Proteomes" id="UP000004994">
    <property type="component" value="Unplaced"/>
</dbReference>
<dbReference type="GO" id="GO:0005737">
    <property type="term" value="C:cytoplasm"/>
    <property type="evidence" value="ECO:0000318"/>
    <property type="project" value="GO_Central"/>
</dbReference>
<dbReference type="GO" id="GO:0008104">
    <property type="term" value="P:protein localization"/>
    <property type="evidence" value="ECO:0000318"/>
    <property type="project" value="GO_Central"/>
</dbReference>
<dbReference type="GO" id="GO:0007165">
    <property type="term" value="P:signal transduction"/>
    <property type="evidence" value="ECO:0000318"/>
    <property type="project" value="GO_Central"/>
</dbReference>
<dbReference type="FunFam" id="1.20.190.20:FF:000002">
    <property type="entry name" value="14-3-3 protein epsilon"/>
    <property type="match status" value="1"/>
</dbReference>
<dbReference type="Gene3D" id="1.20.190.20">
    <property type="entry name" value="14-3-3 domain"/>
    <property type="match status" value="1"/>
</dbReference>
<dbReference type="InterPro" id="IPR000308">
    <property type="entry name" value="14-3-3"/>
</dbReference>
<dbReference type="InterPro" id="IPR023409">
    <property type="entry name" value="14-3-3_CS"/>
</dbReference>
<dbReference type="InterPro" id="IPR036815">
    <property type="entry name" value="14-3-3_dom_sf"/>
</dbReference>
<dbReference type="InterPro" id="IPR023410">
    <property type="entry name" value="14-3-3_domain"/>
</dbReference>
<dbReference type="PANTHER" id="PTHR18860">
    <property type="entry name" value="14-3-3 PROTEIN"/>
    <property type="match status" value="1"/>
</dbReference>
<dbReference type="Pfam" id="PF00244">
    <property type="entry name" value="14-3-3"/>
    <property type="match status" value="1"/>
</dbReference>
<dbReference type="PIRSF" id="PIRSF000868">
    <property type="entry name" value="14-3-3"/>
    <property type="match status" value="1"/>
</dbReference>
<dbReference type="PRINTS" id="PR00305">
    <property type="entry name" value="1433ZETA"/>
</dbReference>
<dbReference type="SMART" id="SM00101">
    <property type="entry name" value="14_3_3"/>
    <property type="match status" value="1"/>
</dbReference>
<dbReference type="SUPFAM" id="SSF48445">
    <property type="entry name" value="14-3-3 protein"/>
    <property type="match status" value="1"/>
</dbReference>
<dbReference type="PROSITE" id="PS00796">
    <property type="entry name" value="1433_1"/>
    <property type="match status" value="1"/>
</dbReference>
<dbReference type="PROSITE" id="PS00797">
    <property type="entry name" value="1433_2"/>
    <property type="match status" value="1"/>
</dbReference>
<keyword id="KW-1185">Reference proteome</keyword>
<gene>
    <name type="primary">TFT10</name>
</gene>
<evidence type="ECO:0000305" key="1"/>
<reference key="1">
    <citation type="submission" date="2002-08" db="EMBL/GenBank/DDBJ databases">
        <authorList>
            <person name="Roberts M.R."/>
        </authorList>
    </citation>
    <scope>NUCLEOTIDE SEQUENCE [MRNA]</scope>
    <scope>SEQUENCE REVISION TO 45-46 AND 131</scope>
</reference>
<reference key="2">
    <citation type="journal article" date="1999" name="Plant Physiol.">
        <title>Fusicoccin, 14-3-3 proteins, and defense responses in tomato plants.</title>
        <authorList>
            <person name="Roberts M.R."/>
            <person name="Bowles D.J."/>
        </authorList>
    </citation>
    <scope>NUCLEOTIDE SEQUENCE [MRNA] OF 1-138</scope>
    <source>
        <strain>cv. Moneymaker</strain>
        <tissue>Leaf</tissue>
    </source>
</reference>
<feature type="chain" id="PRO_0000058690" description="14-3-3 protein 10">
    <location>
        <begin position="1"/>
        <end position="252"/>
    </location>
</feature>
<accession>P93207</accession>
<proteinExistence type="evidence at transcript level"/>
<protein>
    <recommendedName>
        <fullName>14-3-3 protein 10</fullName>
    </recommendedName>
</protein>
<comment type="subunit">
    <text evidence="1">Homodimer.</text>
</comment>
<comment type="similarity">
    <text evidence="1">Belongs to the 14-3-3 family.</text>
</comment>
<sequence>MAALIPENLSREQCLYLAKLAEQAERYEEMVQFMDKLVLNSTPAGELTVEERNLLSVAYKNVIGSLRAAWRIVSSIEQKEESRKNEEHVHLVKEYRGKVENELSQVCAGILKLLESNLVPSATTSESKVFYLKMKGDYYRYLAEFKIGDERKQAAEDTMNSYKAAQEIALTDLPPTHPIRLGLALNFSVFYFEILNSSDKACSMAKQAFEEAIAELDTLGEESYKDSTLIMQLLRDNLTLWTSDAQDQLDES</sequence>
<organism>
    <name type="scientific">Solanum lycopersicum</name>
    <name type="common">Tomato</name>
    <name type="synonym">Lycopersicon esculentum</name>
    <dbReference type="NCBI Taxonomy" id="4081"/>
    <lineage>
        <taxon>Eukaryota</taxon>
        <taxon>Viridiplantae</taxon>
        <taxon>Streptophyta</taxon>
        <taxon>Embryophyta</taxon>
        <taxon>Tracheophyta</taxon>
        <taxon>Spermatophyta</taxon>
        <taxon>Magnoliopsida</taxon>
        <taxon>eudicotyledons</taxon>
        <taxon>Gunneridae</taxon>
        <taxon>Pentapetalae</taxon>
        <taxon>asterids</taxon>
        <taxon>lamiids</taxon>
        <taxon>Solanales</taxon>
        <taxon>Solanaceae</taxon>
        <taxon>Solanoideae</taxon>
        <taxon>Solaneae</taxon>
        <taxon>Solanum</taxon>
        <taxon>Solanum subgen. Lycopersicon</taxon>
    </lineage>
</organism>
<name>14310_SOLLC</name>